<reference key="1">
    <citation type="journal article" date="1991" name="Biochim. Biophys. Acta">
        <title>Cloning, nucleotide sequence and expression in Escherichia coli of two cobalt-containing nitrile hydratase genes from Rhodococcus rhodochrous J1.</title>
        <authorList>
            <person name="Kobayashi M."/>
            <person name="Nishiyama M."/>
            <person name="Nagasawa T."/>
            <person name="Horinouchi S."/>
            <person name="Beppu T."/>
            <person name="Yamada H."/>
        </authorList>
    </citation>
    <scope>NUCLEOTIDE SEQUENCE [GENOMIC DNA]</scope>
    <scope>PARTIAL PROTEIN SEQUENCE</scope>
    <source>
        <strain>J1</strain>
    </source>
</reference>
<accession>P29378</accession>
<protein>
    <recommendedName>
        <fullName>Low-molecular weight cobalt-containing nitrile hydratase subunit alpha</fullName>
        <shortName>L-NHase</shortName>
        <shortName>L-nitrilase</shortName>
        <ecNumber>4.2.1.84</ecNumber>
    </recommendedName>
</protein>
<proteinExistence type="evidence at protein level"/>
<feature type="initiator methionine" description="Removed">
    <location>
        <position position="1"/>
    </location>
</feature>
<feature type="chain" id="PRO_0000186825" description="Low-molecular weight cobalt-containing nitrile hydratase subunit alpha">
    <location>
        <begin position="2"/>
        <end position="207"/>
    </location>
</feature>
<feature type="binding site" evidence="1">
    <location>
        <position position="109"/>
    </location>
    <ligand>
        <name>Co(3+)</name>
        <dbReference type="ChEBI" id="CHEBI:49415"/>
    </ligand>
</feature>
<feature type="binding site" evidence="1">
    <location>
        <position position="112"/>
    </location>
    <ligand>
        <name>Co(3+)</name>
        <dbReference type="ChEBI" id="CHEBI:49415"/>
    </ligand>
</feature>
<feature type="binding site" evidence="1">
    <location>
        <position position="113"/>
    </location>
    <ligand>
        <name>Co(3+)</name>
        <dbReference type="ChEBI" id="CHEBI:49415"/>
    </ligand>
</feature>
<feature type="binding site" evidence="1">
    <location>
        <position position="114"/>
    </location>
    <ligand>
        <name>Co(3+)</name>
        <dbReference type="ChEBI" id="CHEBI:49415"/>
    </ligand>
</feature>
<organism>
    <name type="scientific">Rhodococcus rhodochrous</name>
    <dbReference type="NCBI Taxonomy" id="1829"/>
    <lineage>
        <taxon>Bacteria</taxon>
        <taxon>Bacillati</taxon>
        <taxon>Actinomycetota</taxon>
        <taxon>Actinomycetes</taxon>
        <taxon>Mycobacteriales</taxon>
        <taxon>Nocardiaceae</taxon>
        <taxon>Rhodococcus</taxon>
    </lineage>
</organism>
<comment type="function">
    <text>NHase catalyzes the hydration of various nitrile compounds to the corresponding amides.</text>
</comment>
<comment type="catalytic activity">
    <reaction>
        <text>an aliphatic primary amide = an aliphatic nitrile + H2O</text>
        <dbReference type="Rhea" id="RHEA:12673"/>
        <dbReference type="ChEBI" id="CHEBI:15377"/>
        <dbReference type="ChEBI" id="CHEBI:65285"/>
        <dbReference type="ChEBI" id="CHEBI:80291"/>
        <dbReference type="EC" id="4.2.1.84"/>
    </reaction>
</comment>
<comment type="cofactor">
    <cofactor>
        <name>Co(3+)</name>
        <dbReference type="ChEBI" id="CHEBI:49415"/>
    </cofactor>
    <text>Binds 1 Co(3+) ion per subunit.</text>
</comment>
<comment type="subunit">
    <text>Heterodimer of an alpha and a beta chain.</text>
</comment>
<comment type="interaction">
    <interactant intactId="EBI-15729943">
        <id>P29378</id>
    </interactant>
    <interactant intactId="EBI-15729982">
        <id>P96453</id>
        <label>nhlE</label>
    </interactant>
    <organismsDiffer>false</organismsDiffer>
    <experiments>2</experiments>
</comment>
<comment type="interaction">
    <interactant intactId="EBI-15729943">
        <id>P29378</id>
    </interactant>
    <interactant intactId="EBI-15729954">
        <id>P29379</id>
    </interactant>
    <organismsDiffer>false</organismsDiffer>
    <experiments>2</experiments>
</comment>
<comment type="induction">
    <text>By cobalt and urea or cyclohexanecarboxamide.</text>
</comment>
<comment type="biotechnology">
    <text>Industrial production of acrylamide is now being developed using some of these enzymes.</text>
</comment>
<comment type="similarity">
    <text evidence="2">Belongs to the nitrile hydratase subunit alpha family.</text>
</comment>
<keyword id="KW-0170">Cobalt</keyword>
<keyword id="KW-0903">Direct protein sequencing</keyword>
<keyword id="KW-0456">Lyase</keyword>
<keyword id="KW-0479">Metal-binding</keyword>
<name>NHA2_RHORH</name>
<dbReference type="EC" id="4.2.1.84"/>
<dbReference type="EMBL" id="X64360">
    <property type="protein sequence ID" value="CAA45712.1"/>
    <property type="molecule type" value="Genomic_DNA"/>
</dbReference>
<dbReference type="PIR" id="S19716">
    <property type="entry name" value="S19716"/>
</dbReference>
<dbReference type="RefSeq" id="WP_088899668.1">
    <property type="nucleotide sequence ID" value="NZ_CP027558.1"/>
</dbReference>
<dbReference type="SMR" id="P29378"/>
<dbReference type="DIP" id="DIP-46299N"/>
<dbReference type="IntAct" id="P29378">
    <property type="interactions" value="2"/>
</dbReference>
<dbReference type="BRENDA" id="4.2.1.84">
    <property type="organism ID" value="5395"/>
</dbReference>
<dbReference type="GO" id="GO:0018822">
    <property type="term" value="F:nitrile hydratase activity"/>
    <property type="evidence" value="ECO:0007669"/>
    <property type="project" value="UniProtKB-EC"/>
</dbReference>
<dbReference type="GO" id="GO:0046914">
    <property type="term" value="F:transition metal ion binding"/>
    <property type="evidence" value="ECO:0007669"/>
    <property type="project" value="InterPro"/>
</dbReference>
<dbReference type="Gene3D" id="3.90.330.10">
    <property type="entry name" value="Nitrile hydratase alpha /Thiocyanate hydrolase gamma"/>
    <property type="match status" value="1"/>
</dbReference>
<dbReference type="InterPro" id="IPR036648">
    <property type="entry name" value="CN_Hdrase_a/SCN_Hdrase_g_sf"/>
</dbReference>
<dbReference type="InterPro" id="IPR004232">
    <property type="entry name" value="CN_Hdrtase_a/SCN_Hdrlase_g"/>
</dbReference>
<dbReference type="InterPro" id="IPR023900">
    <property type="entry name" value="CN_Hdrtase_asu/SCN_Hdrlase_gsu"/>
</dbReference>
<dbReference type="InterPro" id="IPR018141">
    <property type="entry name" value="Nitrile_hydratase_asu"/>
</dbReference>
<dbReference type="NCBIfam" id="TIGR01323">
    <property type="entry name" value="nitrile_alph"/>
    <property type="match status" value="1"/>
</dbReference>
<dbReference type="Pfam" id="PF02979">
    <property type="entry name" value="NHase_alpha"/>
    <property type="match status" value="1"/>
</dbReference>
<dbReference type="PIRSF" id="PIRSF001426">
    <property type="entry name" value="NHase_alpha"/>
    <property type="match status" value="1"/>
</dbReference>
<dbReference type="SUPFAM" id="SSF56209">
    <property type="entry name" value="Nitrile hydratase alpha chain"/>
    <property type="match status" value="1"/>
</dbReference>
<evidence type="ECO:0000250" key="1"/>
<evidence type="ECO:0000305" key="2"/>
<sequence>MTAHNPVQGTLPRSNEEIAARVKAMEAILVDKGLISTDAIDHMSSVYENEVGPQLGAKIVARAWVDPEFKQRLLTDATSACREMGVGGMQGEEMVVLENTGTVHNMVVCTLCSCYPWPVLGLPPNWYKYPAYRARAVRDPRGVLAEFGYTPDPDVEIRIWDSSAELRYWVLPQRPAGTENFTEEQLADLVTRDSLIGVSVPTTPSKA</sequence>